<evidence type="ECO:0000255" key="1">
    <source>
        <dbReference type="HAMAP-Rule" id="MF_00186"/>
    </source>
</evidence>
<proteinExistence type="inferred from homology"/>
<name>GLPK_ACAM1</name>
<organism>
    <name type="scientific">Acaryochloris marina (strain MBIC 11017)</name>
    <dbReference type="NCBI Taxonomy" id="329726"/>
    <lineage>
        <taxon>Bacteria</taxon>
        <taxon>Bacillati</taxon>
        <taxon>Cyanobacteriota</taxon>
        <taxon>Cyanophyceae</taxon>
        <taxon>Acaryochloridales</taxon>
        <taxon>Acaryochloridaceae</taxon>
        <taxon>Acaryochloris</taxon>
    </lineage>
</organism>
<feature type="chain" id="PRO_1000124175" description="Glycerol kinase">
    <location>
        <begin position="1"/>
        <end position="502"/>
    </location>
</feature>
<feature type="binding site" evidence="1">
    <location>
        <position position="14"/>
    </location>
    <ligand>
        <name>ADP</name>
        <dbReference type="ChEBI" id="CHEBI:456216"/>
    </ligand>
</feature>
<feature type="binding site" evidence="1">
    <location>
        <position position="14"/>
    </location>
    <ligand>
        <name>ATP</name>
        <dbReference type="ChEBI" id="CHEBI:30616"/>
    </ligand>
</feature>
<feature type="binding site" evidence="1">
    <location>
        <position position="14"/>
    </location>
    <ligand>
        <name>sn-glycerol 3-phosphate</name>
        <dbReference type="ChEBI" id="CHEBI:57597"/>
    </ligand>
</feature>
<feature type="binding site" evidence="1">
    <location>
        <position position="15"/>
    </location>
    <ligand>
        <name>ATP</name>
        <dbReference type="ChEBI" id="CHEBI:30616"/>
    </ligand>
</feature>
<feature type="binding site" evidence="1">
    <location>
        <position position="18"/>
    </location>
    <ligand>
        <name>ADP</name>
        <dbReference type="ChEBI" id="CHEBI:456216"/>
    </ligand>
</feature>
<feature type="binding site" evidence="1">
    <location>
        <position position="84"/>
    </location>
    <ligand>
        <name>glycerol</name>
        <dbReference type="ChEBI" id="CHEBI:17754"/>
    </ligand>
</feature>
<feature type="binding site" evidence="1">
    <location>
        <position position="84"/>
    </location>
    <ligand>
        <name>sn-glycerol 3-phosphate</name>
        <dbReference type="ChEBI" id="CHEBI:57597"/>
    </ligand>
</feature>
<feature type="binding site" evidence="1">
    <location>
        <position position="85"/>
    </location>
    <ligand>
        <name>glycerol</name>
        <dbReference type="ChEBI" id="CHEBI:17754"/>
    </ligand>
</feature>
<feature type="binding site" evidence="1">
    <location>
        <position position="85"/>
    </location>
    <ligand>
        <name>sn-glycerol 3-phosphate</name>
        <dbReference type="ChEBI" id="CHEBI:57597"/>
    </ligand>
</feature>
<feature type="binding site" evidence="1">
    <location>
        <position position="136"/>
    </location>
    <ligand>
        <name>glycerol</name>
        <dbReference type="ChEBI" id="CHEBI:17754"/>
    </ligand>
</feature>
<feature type="binding site" evidence="1">
    <location>
        <position position="136"/>
    </location>
    <ligand>
        <name>sn-glycerol 3-phosphate</name>
        <dbReference type="ChEBI" id="CHEBI:57597"/>
    </ligand>
</feature>
<feature type="binding site" evidence="1">
    <location>
        <position position="245"/>
    </location>
    <ligand>
        <name>glycerol</name>
        <dbReference type="ChEBI" id="CHEBI:17754"/>
    </ligand>
</feature>
<feature type="binding site" evidence="1">
    <location>
        <position position="245"/>
    </location>
    <ligand>
        <name>sn-glycerol 3-phosphate</name>
        <dbReference type="ChEBI" id="CHEBI:57597"/>
    </ligand>
</feature>
<feature type="binding site" evidence="1">
    <location>
        <position position="246"/>
    </location>
    <ligand>
        <name>glycerol</name>
        <dbReference type="ChEBI" id="CHEBI:17754"/>
    </ligand>
</feature>
<feature type="binding site" evidence="1">
    <location>
        <position position="267"/>
    </location>
    <ligand>
        <name>ADP</name>
        <dbReference type="ChEBI" id="CHEBI:456216"/>
    </ligand>
</feature>
<feature type="binding site" evidence="1">
    <location>
        <position position="267"/>
    </location>
    <ligand>
        <name>ATP</name>
        <dbReference type="ChEBI" id="CHEBI:30616"/>
    </ligand>
</feature>
<feature type="binding site" evidence="1">
    <location>
        <position position="314"/>
    </location>
    <ligand>
        <name>ADP</name>
        <dbReference type="ChEBI" id="CHEBI:456216"/>
    </ligand>
</feature>
<feature type="binding site" evidence="1">
    <location>
        <position position="314"/>
    </location>
    <ligand>
        <name>ATP</name>
        <dbReference type="ChEBI" id="CHEBI:30616"/>
    </ligand>
</feature>
<feature type="binding site" evidence="1">
    <location>
        <position position="318"/>
    </location>
    <ligand>
        <name>ATP</name>
        <dbReference type="ChEBI" id="CHEBI:30616"/>
    </ligand>
</feature>
<feature type="binding site" evidence="1">
    <location>
        <position position="415"/>
    </location>
    <ligand>
        <name>ADP</name>
        <dbReference type="ChEBI" id="CHEBI:456216"/>
    </ligand>
</feature>
<feature type="binding site" evidence="1">
    <location>
        <position position="415"/>
    </location>
    <ligand>
        <name>ATP</name>
        <dbReference type="ChEBI" id="CHEBI:30616"/>
    </ligand>
</feature>
<feature type="binding site" evidence="1">
    <location>
        <position position="419"/>
    </location>
    <ligand>
        <name>ADP</name>
        <dbReference type="ChEBI" id="CHEBI:456216"/>
    </ligand>
</feature>
<reference key="1">
    <citation type="journal article" date="2008" name="Proc. Natl. Acad. Sci. U.S.A.">
        <title>Niche adaptation and genome expansion in the chlorophyll d-producing cyanobacterium Acaryochloris marina.</title>
        <authorList>
            <person name="Swingley W.D."/>
            <person name="Chen M."/>
            <person name="Cheung P.C."/>
            <person name="Conrad A.L."/>
            <person name="Dejesa L.C."/>
            <person name="Hao J."/>
            <person name="Honchak B.M."/>
            <person name="Karbach L.E."/>
            <person name="Kurdoglu A."/>
            <person name="Lahiri S."/>
            <person name="Mastrian S.D."/>
            <person name="Miyashita H."/>
            <person name="Page L."/>
            <person name="Ramakrishna P."/>
            <person name="Satoh S."/>
            <person name="Sattley W.M."/>
            <person name="Shimada Y."/>
            <person name="Taylor H.L."/>
            <person name="Tomo T."/>
            <person name="Tsuchiya T."/>
            <person name="Wang Z.T."/>
            <person name="Raymond J."/>
            <person name="Mimuro M."/>
            <person name="Blankenship R.E."/>
            <person name="Touchman J.W."/>
        </authorList>
    </citation>
    <scope>NUCLEOTIDE SEQUENCE [LARGE SCALE GENOMIC DNA]</scope>
    <source>
        <strain>MBIC 11017</strain>
    </source>
</reference>
<sequence length="502" mass="54636">MTSATYIMALDLGTTGNRAILFDQDGQIVDQAYKELPQYYPQPGWVEHDALEIWRDTRWAMETVVTQAHIDPAQIAAIGLTVQRETCLLWDKTTGQPLHKAIVWQDRRTAAYCNQLAEQGHTQDIYDRTGLVLDAYFSGSKLAWLLTEVKRQNPNLNLDNVIAGTIDTWALWNLTGGKVHATDHSNASRTLLLNLSQGTWDDHLLDLFGIPKSFMPAIQPSLGIFGKTDTKFLGQEIPIAAIFGDQQAALFAHGCDRPGALKCTYGTGSFLVAHTGSNIARSKNRLLSTVAWTQTDKGQTQTGYAIEGSMFTSGACIQWLRDGLKLIANAAETEGLAQAVEDNGGVYFVPALSGLGAPHWDMSARGAFLGITRGAQREHMVRAVLEAIAFQTKEVVDAVNQDCGSPIQQLKVDGGACQNNFLMQYQADVLGIPVERPAVLDATAQGAAFGAGLAIGVWKDYAGLVAARKIDQVFKPGANAQTAQANFKTWQKAVERAKNWAD</sequence>
<dbReference type="EC" id="2.7.1.30" evidence="1"/>
<dbReference type="EMBL" id="CP000828">
    <property type="protein sequence ID" value="ABW26709.1"/>
    <property type="molecule type" value="Genomic_DNA"/>
</dbReference>
<dbReference type="RefSeq" id="WP_012162226.1">
    <property type="nucleotide sequence ID" value="NC_009925.1"/>
</dbReference>
<dbReference type="SMR" id="B0CB70"/>
<dbReference type="STRING" id="329726.AM1_1688"/>
<dbReference type="KEGG" id="amr:AM1_1688"/>
<dbReference type="eggNOG" id="COG0554">
    <property type="taxonomic scope" value="Bacteria"/>
</dbReference>
<dbReference type="HOGENOM" id="CLU_009281_2_3_3"/>
<dbReference type="OrthoDB" id="9805576at2"/>
<dbReference type="UniPathway" id="UPA00618">
    <property type="reaction ID" value="UER00672"/>
</dbReference>
<dbReference type="Proteomes" id="UP000000268">
    <property type="component" value="Chromosome"/>
</dbReference>
<dbReference type="GO" id="GO:0005829">
    <property type="term" value="C:cytosol"/>
    <property type="evidence" value="ECO:0007669"/>
    <property type="project" value="TreeGrafter"/>
</dbReference>
<dbReference type="GO" id="GO:0005524">
    <property type="term" value="F:ATP binding"/>
    <property type="evidence" value="ECO:0007669"/>
    <property type="project" value="UniProtKB-UniRule"/>
</dbReference>
<dbReference type="GO" id="GO:0004370">
    <property type="term" value="F:glycerol kinase activity"/>
    <property type="evidence" value="ECO:0000250"/>
    <property type="project" value="UniProtKB"/>
</dbReference>
<dbReference type="GO" id="GO:0019563">
    <property type="term" value="P:glycerol catabolic process"/>
    <property type="evidence" value="ECO:0007669"/>
    <property type="project" value="UniProtKB-UniRule"/>
</dbReference>
<dbReference type="GO" id="GO:0006071">
    <property type="term" value="P:glycerol metabolic process"/>
    <property type="evidence" value="ECO:0000250"/>
    <property type="project" value="UniProtKB"/>
</dbReference>
<dbReference type="GO" id="GO:0006072">
    <property type="term" value="P:glycerol-3-phosphate metabolic process"/>
    <property type="evidence" value="ECO:0007669"/>
    <property type="project" value="InterPro"/>
</dbReference>
<dbReference type="CDD" id="cd07786">
    <property type="entry name" value="FGGY_EcGK_like"/>
    <property type="match status" value="1"/>
</dbReference>
<dbReference type="FunFam" id="3.30.420.40:FF:000007">
    <property type="entry name" value="Glycerol kinase"/>
    <property type="match status" value="1"/>
</dbReference>
<dbReference type="FunFam" id="3.30.420.40:FF:000008">
    <property type="entry name" value="Glycerol kinase"/>
    <property type="match status" value="1"/>
</dbReference>
<dbReference type="Gene3D" id="3.30.420.40">
    <property type="match status" value="2"/>
</dbReference>
<dbReference type="HAMAP" id="MF_00186">
    <property type="entry name" value="Glycerol_kin"/>
    <property type="match status" value="1"/>
</dbReference>
<dbReference type="InterPro" id="IPR043129">
    <property type="entry name" value="ATPase_NBD"/>
</dbReference>
<dbReference type="InterPro" id="IPR000577">
    <property type="entry name" value="Carb_kinase_FGGY"/>
</dbReference>
<dbReference type="InterPro" id="IPR018483">
    <property type="entry name" value="Carb_kinase_FGGY_CS"/>
</dbReference>
<dbReference type="InterPro" id="IPR018485">
    <property type="entry name" value="FGGY_C"/>
</dbReference>
<dbReference type="InterPro" id="IPR018484">
    <property type="entry name" value="FGGY_N"/>
</dbReference>
<dbReference type="InterPro" id="IPR005999">
    <property type="entry name" value="Glycerol_kin"/>
</dbReference>
<dbReference type="NCBIfam" id="TIGR01311">
    <property type="entry name" value="glycerol_kin"/>
    <property type="match status" value="1"/>
</dbReference>
<dbReference type="NCBIfam" id="NF000756">
    <property type="entry name" value="PRK00047.1"/>
    <property type="match status" value="1"/>
</dbReference>
<dbReference type="PANTHER" id="PTHR10196:SF69">
    <property type="entry name" value="GLYCEROL KINASE"/>
    <property type="match status" value="1"/>
</dbReference>
<dbReference type="PANTHER" id="PTHR10196">
    <property type="entry name" value="SUGAR KINASE"/>
    <property type="match status" value="1"/>
</dbReference>
<dbReference type="Pfam" id="PF02782">
    <property type="entry name" value="FGGY_C"/>
    <property type="match status" value="1"/>
</dbReference>
<dbReference type="Pfam" id="PF00370">
    <property type="entry name" value="FGGY_N"/>
    <property type="match status" value="1"/>
</dbReference>
<dbReference type="PIRSF" id="PIRSF000538">
    <property type="entry name" value="GlpK"/>
    <property type="match status" value="1"/>
</dbReference>
<dbReference type="SUPFAM" id="SSF53067">
    <property type="entry name" value="Actin-like ATPase domain"/>
    <property type="match status" value="2"/>
</dbReference>
<dbReference type="PROSITE" id="PS00933">
    <property type="entry name" value="FGGY_KINASES_1"/>
    <property type="match status" value="1"/>
</dbReference>
<dbReference type="PROSITE" id="PS00445">
    <property type="entry name" value="FGGY_KINASES_2"/>
    <property type="match status" value="1"/>
</dbReference>
<accession>B0CB70</accession>
<comment type="function">
    <text evidence="1">Key enzyme in the regulation of glycerol uptake and metabolism. Catalyzes the phosphorylation of glycerol to yield sn-glycerol 3-phosphate.</text>
</comment>
<comment type="catalytic activity">
    <reaction evidence="1">
        <text>glycerol + ATP = sn-glycerol 3-phosphate + ADP + H(+)</text>
        <dbReference type="Rhea" id="RHEA:21644"/>
        <dbReference type="ChEBI" id="CHEBI:15378"/>
        <dbReference type="ChEBI" id="CHEBI:17754"/>
        <dbReference type="ChEBI" id="CHEBI:30616"/>
        <dbReference type="ChEBI" id="CHEBI:57597"/>
        <dbReference type="ChEBI" id="CHEBI:456216"/>
        <dbReference type="EC" id="2.7.1.30"/>
    </reaction>
</comment>
<comment type="activity regulation">
    <text evidence="1">Inhibited by fructose 1,6-bisphosphate (FBP).</text>
</comment>
<comment type="pathway">
    <text evidence="1">Polyol metabolism; glycerol degradation via glycerol kinase pathway; sn-glycerol 3-phosphate from glycerol: step 1/1.</text>
</comment>
<comment type="similarity">
    <text evidence="1">Belongs to the FGGY kinase family.</text>
</comment>
<keyword id="KW-0067">ATP-binding</keyword>
<keyword id="KW-0319">Glycerol metabolism</keyword>
<keyword id="KW-0418">Kinase</keyword>
<keyword id="KW-0547">Nucleotide-binding</keyword>
<keyword id="KW-1185">Reference proteome</keyword>
<keyword id="KW-0808">Transferase</keyword>
<gene>
    <name evidence="1" type="primary">glpK</name>
    <name type="ordered locus">AM1_1688</name>
</gene>
<protein>
    <recommendedName>
        <fullName evidence="1">Glycerol kinase</fullName>
        <ecNumber evidence="1">2.7.1.30</ecNumber>
    </recommendedName>
    <alternativeName>
        <fullName evidence="1">ATP:glycerol 3-phosphotransferase</fullName>
    </alternativeName>
    <alternativeName>
        <fullName evidence="1">Glycerokinase</fullName>
        <shortName evidence="1">GK</shortName>
    </alternativeName>
</protein>